<organism>
    <name type="scientific">Rhizorhabdus wittichii (strain DSM 6014 / CCUG 31198 / JCM 15750 / NBRC 105917 / EY 4224 / RW1)</name>
    <name type="common">Sphingomonas wittichii</name>
    <dbReference type="NCBI Taxonomy" id="392499"/>
    <lineage>
        <taxon>Bacteria</taxon>
        <taxon>Pseudomonadati</taxon>
        <taxon>Pseudomonadota</taxon>
        <taxon>Alphaproteobacteria</taxon>
        <taxon>Sphingomonadales</taxon>
        <taxon>Sphingomonadaceae</taxon>
        <taxon>Rhizorhabdus</taxon>
    </lineage>
</organism>
<evidence type="ECO:0000255" key="1">
    <source>
        <dbReference type="HAMAP-Rule" id="MF_01017"/>
    </source>
</evidence>
<accession>A5VA47</accession>
<name>NQOR_RHIWR</name>
<feature type="chain" id="PRO_1000084148" description="NAD(P)H dehydrogenase (quinone)">
    <location>
        <begin position="1"/>
        <end position="199"/>
    </location>
</feature>
<feature type="domain" description="Flavodoxin-like" evidence="1">
    <location>
        <begin position="4"/>
        <end position="190"/>
    </location>
</feature>
<feature type="binding site" evidence="1">
    <location>
        <begin position="10"/>
        <end position="15"/>
    </location>
    <ligand>
        <name>FMN</name>
        <dbReference type="ChEBI" id="CHEBI:58210"/>
    </ligand>
</feature>
<feature type="binding site" evidence="1">
    <location>
        <position position="12"/>
    </location>
    <ligand>
        <name>NAD(+)</name>
        <dbReference type="ChEBI" id="CHEBI:57540"/>
    </ligand>
</feature>
<feature type="binding site" evidence="1">
    <location>
        <begin position="78"/>
        <end position="80"/>
    </location>
    <ligand>
        <name>FMN</name>
        <dbReference type="ChEBI" id="CHEBI:58210"/>
    </ligand>
</feature>
<feature type="binding site" evidence="1">
    <location>
        <position position="98"/>
    </location>
    <ligand>
        <name>substrate</name>
    </ligand>
</feature>
<feature type="binding site" evidence="1">
    <location>
        <begin position="113"/>
        <end position="119"/>
    </location>
    <ligand>
        <name>FMN</name>
        <dbReference type="ChEBI" id="CHEBI:58210"/>
    </ligand>
</feature>
<feature type="binding site" evidence="1">
    <location>
        <position position="134"/>
    </location>
    <ligand>
        <name>FMN</name>
        <dbReference type="ChEBI" id="CHEBI:58210"/>
    </ligand>
</feature>
<gene>
    <name type="ordered locus">Swit_2810</name>
</gene>
<protein>
    <recommendedName>
        <fullName evidence="1">NAD(P)H dehydrogenase (quinone)</fullName>
        <ecNumber evidence="1">1.6.5.2</ecNumber>
    </recommendedName>
    <alternativeName>
        <fullName>Flavoprotein WrbA</fullName>
    </alternativeName>
    <alternativeName>
        <fullName evidence="1">NAD(P)H:quinone oxidoreductase</fullName>
        <shortName evidence="1">NQO</shortName>
    </alternativeName>
</protein>
<proteinExistence type="inferred from homology"/>
<sequence>MPKILVLYYSTYGHIETMAEAIAEGARSAGAEVDVKRVPETVPLDIAEKNHFKLDQKAPVATVAELEDYDAIIVGTGTRFGRMSSQMAAFLDGAGGLWARGALNGKVGAAFASTATQHGGQETTLFSIITNLLHFGMTIVGLPYAYQGQMGVDEVKGGAPYGATTIADGDGSRQPSATDLDGARFQGRHVAEITAKLVG</sequence>
<dbReference type="EC" id="1.6.5.2" evidence="1"/>
<dbReference type="EMBL" id="CP000699">
    <property type="protein sequence ID" value="ABQ69163.1"/>
    <property type="molecule type" value="Genomic_DNA"/>
</dbReference>
<dbReference type="SMR" id="A5VA47"/>
<dbReference type="STRING" id="392499.Swit_2810"/>
<dbReference type="PaxDb" id="392499-Swit_2810"/>
<dbReference type="KEGG" id="swi:Swit_2810"/>
<dbReference type="eggNOG" id="COG0655">
    <property type="taxonomic scope" value="Bacteria"/>
</dbReference>
<dbReference type="HOGENOM" id="CLU_051402_0_2_5"/>
<dbReference type="OrthoDB" id="9801479at2"/>
<dbReference type="Proteomes" id="UP000001989">
    <property type="component" value="Chromosome"/>
</dbReference>
<dbReference type="GO" id="GO:0016020">
    <property type="term" value="C:membrane"/>
    <property type="evidence" value="ECO:0007669"/>
    <property type="project" value="TreeGrafter"/>
</dbReference>
<dbReference type="GO" id="GO:0050660">
    <property type="term" value="F:flavin adenine dinucleotide binding"/>
    <property type="evidence" value="ECO:0007669"/>
    <property type="project" value="UniProtKB-UniRule"/>
</dbReference>
<dbReference type="GO" id="GO:0010181">
    <property type="term" value="F:FMN binding"/>
    <property type="evidence" value="ECO:0007669"/>
    <property type="project" value="InterPro"/>
</dbReference>
<dbReference type="GO" id="GO:0051287">
    <property type="term" value="F:NAD binding"/>
    <property type="evidence" value="ECO:0007669"/>
    <property type="project" value="UniProtKB-UniRule"/>
</dbReference>
<dbReference type="GO" id="GO:0050136">
    <property type="term" value="F:NADH:ubiquinone reductase (non-electrogenic) activity"/>
    <property type="evidence" value="ECO:0007669"/>
    <property type="project" value="RHEA"/>
</dbReference>
<dbReference type="GO" id="GO:0050661">
    <property type="term" value="F:NADP binding"/>
    <property type="evidence" value="ECO:0007669"/>
    <property type="project" value="UniProtKB-UniRule"/>
</dbReference>
<dbReference type="GO" id="GO:0008753">
    <property type="term" value="F:NADPH dehydrogenase (quinone) activity"/>
    <property type="evidence" value="ECO:0007669"/>
    <property type="project" value="RHEA"/>
</dbReference>
<dbReference type="FunFam" id="3.40.50.360:FF:000001">
    <property type="entry name" value="NAD(P)H dehydrogenase (Quinone) FQR1-like"/>
    <property type="match status" value="1"/>
</dbReference>
<dbReference type="Gene3D" id="3.40.50.360">
    <property type="match status" value="1"/>
</dbReference>
<dbReference type="HAMAP" id="MF_01017">
    <property type="entry name" value="NQOR"/>
    <property type="match status" value="1"/>
</dbReference>
<dbReference type="InterPro" id="IPR008254">
    <property type="entry name" value="Flavodoxin/NO_synth"/>
</dbReference>
<dbReference type="InterPro" id="IPR029039">
    <property type="entry name" value="Flavoprotein-like_sf"/>
</dbReference>
<dbReference type="InterPro" id="IPR010089">
    <property type="entry name" value="Flavoprotein_WrbA-like"/>
</dbReference>
<dbReference type="InterPro" id="IPR005025">
    <property type="entry name" value="FMN_Rdtase-like_dom"/>
</dbReference>
<dbReference type="InterPro" id="IPR037513">
    <property type="entry name" value="NQO"/>
</dbReference>
<dbReference type="NCBIfam" id="TIGR01755">
    <property type="entry name" value="flav_wrbA"/>
    <property type="match status" value="1"/>
</dbReference>
<dbReference type="NCBIfam" id="NF002999">
    <property type="entry name" value="PRK03767.1"/>
    <property type="match status" value="1"/>
</dbReference>
<dbReference type="PANTHER" id="PTHR30546">
    <property type="entry name" value="FLAVODOXIN-RELATED PROTEIN WRBA-RELATED"/>
    <property type="match status" value="1"/>
</dbReference>
<dbReference type="PANTHER" id="PTHR30546:SF23">
    <property type="entry name" value="FLAVOPROTEIN-LIKE PROTEIN YCP4-RELATED"/>
    <property type="match status" value="1"/>
</dbReference>
<dbReference type="Pfam" id="PF03358">
    <property type="entry name" value="FMN_red"/>
    <property type="match status" value="1"/>
</dbReference>
<dbReference type="SUPFAM" id="SSF52218">
    <property type="entry name" value="Flavoproteins"/>
    <property type="match status" value="1"/>
</dbReference>
<dbReference type="PROSITE" id="PS50902">
    <property type="entry name" value="FLAVODOXIN_LIKE"/>
    <property type="match status" value="1"/>
</dbReference>
<keyword id="KW-0285">Flavoprotein</keyword>
<keyword id="KW-0288">FMN</keyword>
<keyword id="KW-0520">NAD</keyword>
<keyword id="KW-0521">NADP</keyword>
<keyword id="KW-0547">Nucleotide-binding</keyword>
<keyword id="KW-0560">Oxidoreductase</keyword>
<keyword id="KW-1185">Reference proteome</keyword>
<reference key="1">
    <citation type="journal article" date="2010" name="J. Bacteriol.">
        <title>Genome sequence of the dioxin-mineralizing bacterium Sphingomonas wittichii RW1.</title>
        <authorList>
            <person name="Miller T.R."/>
            <person name="Delcher A.L."/>
            <person name="Salzberg S.L."/>
            <person name="Saunders E."/>
            <person name="Detter J.C."/>
            <person name="Halden R.U."/>
        </authorList>
    </citation>
    <scope>NUCLEOTIDE SEQUENCE [LARGE SCALE GENOMIC DNA]</scope>
    <source>
        <strain>DSM 6014 / CCUG 31198 / JCM 15750 / NBRC 105917 / EY 4224 / RW1</strain>
    </source>
</reference>
<comment type="catalytic activity">
    <reaction evidence="1">
        <text>a quinone + NADH + H(+) = a quinol + NAD(+)</text>
        <dbReference type="Rhea" id="RHEA:46160"/>
        <dbReference type="ChEBI" id="CHEBI:15378"/>
        <dbReference type="ChEBI" id="CHEBI:24646"/>
        <dbReference type="ChEBI" id="CHEBI:57540"/>
        <dbReference type="ChEBI" id="CHEBI:57945"/>
        <dbReference type="ChEBI" id="CHEBI:132124"/>
        <dbReference type="EC" id="1.6.5.2"/>
    </reaction>
</comment>
<comment type="catalytic activity">
    <reaction evidence="1">
        <text>a quinone + NADPH + H(+) = a quinol + NADP(+)</text>
        <dbReference type="Rhea" id="RHEA:46164"/>
        <dbReference type="ChEBI" id="CHEBI:15378"/>
        <dbReference type="ChEBI" id="CHEBI:24646"/>
        <dbReference type="ChEBI" id="CHEBI:57783"/>
        <dbReference type="ChEBI" id="CHEBI:58349"/>
        <dbReference type="ChEBI" id="CHEBI:132124"/>
        <dbReference type="EC" id="1.6.5.2"/>
    </reaction>
</comment>
<comment type="cofactor">
    <cofactor evidence="1">
        <name>FMN</name>
        <dbReference type="ChEBI" id="CHEBI:58210"/>
    </cofactor>
    <text evidence="1">Binds 1 FMN per monomer.</text>
</comment>
<comment type="similarity">
    <text evidence="1">Belongs to the WrbA family.</text>
</comment>